<reference key="1">
    <citation type="journal article" date="2003" name="Nat. Genet.">
        <title>Comparative analysis of the genome sequences of Bordetella pertussis, Bordetella parapertussis and Bordetella bronchiseptica.</title>
        <authorList>
            <person name="Parkhill J."/>
            <person name="Sebaihia M."/>
            <person name="Preston A."/>
            <person name="Murphy L.D."/>
            <person name="Thomson N.R."/>
            <person name="Harris D.E."/>
            <person name="Holden M.T.G."/>
            <person name="Churcher C.M."/>
            <person name="Bentley S.D."/>
            <person name="Mungall K.L."/>
            <person name="Cerdeno-Tarraga A.-M."/>
            <person name="Temple L."/>
            <person name="James K.D."/>
            <person name="Harris B."/>
            <person name="Quail M.A."/>
            <person name="Achtman M."/>
            <person name="Atkin R."/>
            <person name="Baker S."/>
            <person name="Basham D."/>
            <person name="Bason N."/>
            <person name="Cherevach I."/>
            <person name="Chillingworth T."/>
            <person name="Collins M."/>
            <person name="Cronin A."/>
            <person name="Davis P."/>
            <person name="Doggett J."/>
            <person name="Feltwell T."/>
            <person name="Goble A."/>
            <person name="Hamlin N."/>
            <person name="Hauser H."/>
            <person name="Holroyd S."/>
            <person name="Jagels K."/>
            <person name="Leather S."/>
            <person name="Moule S."/>
            <person name="Norberczak H."/>
            <person name="O'Neil S."/>
            <person name="Ormond D."/>
            <person name="Price C."/>
            <person name="Rabbinowitsch E."/>
            <person name="Rutter S."/>
            <person name="Sanders M."/>
            <person name="Saunders D."/>
            <person name="Seeger K."/>
            <person name="Sharp S."/>
            <person name="Simmonds M."/>
            <person name="Skelton J."/>
            <person name="Squares R."/>
            <person name="Squares S."/>
            <person name="Stevens K."/>
            <person name="Unwin L."/>
            <person name="Whitehead S."/>
            <person name="Barrell B.G."/>
            <person name="Maskell D.J."/>
        </authorList>
    </citation>
    <scope>NUCLEOTIDE SEQUENCE [LARGE SCALE GENOMIC DNA]</scope>
    <source>
        <strain>Tohama I / ATCC BAA-589 / NCTC 13251</strain>
    </source>
</reference>
<proteinExistence type="inferred from homology"/>
<name>RS2_BORPE</name>
<feature type="chain" id="PRO_0000134139" description="Small ribosomal subunit protein uS2">
    <location>
        <begin position="1"/>
        <end position="249"/>
    </location>
</feature>
<dbReference type="EMBL" id="BX640415">
    <property type="protein sequence ID" value="CAE41709.1"/>
    <property type="molecule type" value="Genomic_DNA"/>
</dbReference>
<dbReference type="RefSeq" id="NP_880161.1">
    <property type="nucleotide sequence ID" value="NC_002929.2"/>
</dbReference>
<dbReference type="RefSeq" id="WP_003811803.1">
    <property type="nucleotide sequence ID" value="NZ_CP039022.1"/>
</dbReference>
<dbReference type="SMR" id="Q7VYD0"/>
<dbReference type="STRING" id="257313.BP1419"/>
<dbReference type="PaxDb" id="257313-BP1419"/>
<dbReference type="GeneID" id="93203286"/>
<dbReference type="KEGG" id="bpe:BP1419"/>
<dbReference type="PATRIC" id="fig|257313.5.peg.1522"/>
<dbReference type="eggNOG" id="COG0052">
    <property type="taxonomic scope" value="Bacteria"/>
</dbReference>
<dbReference type="HOGENOM" id="CLU_040318_1_2_4"/>
<dbReference type="Proteomes" id="UP000002676">
    <property type="component" value="Chromosome"/>
</dbReference>
<dbReference type="GO" id="GO:0022627">
    <property type="term" value="C:cytosolic small ribosomal subunit"/>
    <property type="evidence" value="ECO:0007669"/>
    <property type="project" value="TreeGrafter"/>
</dbReference>
<dbReference type="GO" id="GO:0003735">
    <property type="term" value="F:structural constituent of ribosome"/>
    <property type="evidence" value="ECO:0007669"/>
    <property type="project" value="InterPro"/>
</dbReference>
<dbReference type="GO" id="GO:0006412">
    <property type="term" value="P:translation"/>
    <property type="evidence" value="ECO:0007669"/>
    <property type="project" value="UniProtKB-UniRule"/>
</dbReference>
<dbReference type="CDD" id="cd01425">
    <property type="entry name" value="RPS2"/>
    <property type="match status" value="1"/>
</dbReference>
<dbReference type="FunFam" id="1.10.287.610:FF:000001">
    <property type="entry name" value="30S ribosomal protein S2"/>
    <property type="match status" value="1"/>
</dbReference>
<dbReference type="Gene3D" id="3.40.50.10490">
    <property type="entry name" value="Glucose-6-phosphate isomerase like protein, domain 1"/>
    <property type="match status" value="1"/>
</dbReference>
<dbReference type="Gene3D" id="1.10.287.610">
    <property type="entry name" value="Helix hairpin bin"/>
    <property type="match status" value="1"/>
</dbReference>
<dbReference type="HAMAP" id="MF_00291_B">
    <property type="entry name" value="Ribosomal_uS2_B"/>
    <property type="match status" value="1"/>
</dbReference>
<dbReference type="InterPro" id="IPR001865">
    <property type="entry name" value="Ribosomal_uS2"/>
</dbReference>
<dbReference type="InterPro" id="IPR005706">
    <property type="entry name" value="Ribosomal_uS2_bac/mit/plastid"/>
</dbReference>
<dbReference type="InterPro" id="IPR018130">
    <property type="entry name" value="Ribosomal_uS2_CS"/>
</dbReference>
<dbReference type="InterPro" id="IPR023591">
    <property type="entry name" value="Ribosomal_uS2_flav_dom_sf"/>
</dbReference>
<dbReference type="NCBIfam" id="TIGR01011">
    <property type="entry name" value="rpsB_bact"/>
    <property type="match status" value="1"/>
</dbReference>
<dbReference type="PANTHER" id="PTHR12534">
    <property type="entry name" value="30S RIBOSOMAL PROTEIN S2 PROKARYOTIC AND ORGANELLAR"/>
    <property type="match status" value="1"/>
</dbReference>
<dbReference type="PANTHER" id="PTHR12534:SF0">
    <property type="entry name" value="SMALL RIBOSOMAL SUBUNIT PROTEIN US2M"/>
    <property type="match status" value="1"/>
</dbReference>
<dbReference type="Pfam" id="PF00318">
    <property type="entry name" value="Ribosomal_S2"/>
    <property type="match status" value="1"/>
</dbReference>
<dbReference type="PRINTS" id="PR00395">
    <property type="entry name" value="RIBOSOMALS2"/>
</dbReference>
<dbReference type="SUPFAM" id="SSF52313">
    <property type="entry name" value="Ribosomal protein S2"/>
    <property type="match status" value="1"/>
</dbReference>
<dbReference type="PROSITE" id="PS00962">
    <property type="entry name" value="RIBOSOMAL_S2_1"/>
    <property type="match status" value="1"/>
</dbReference>
<evidence type="ECO:0000255" key="1">
    <source>
        <dbReference type="HAMAP-Rule" id="MF_00291"/>
    </source>
</evidence>
<evidence type="ECO:0000305" key="2"/>
<organism>
    <name type="scientific">Bordetella pertussis (strain Tohama I / ATCC BAA-589 / NCTC 13251)</name>
    <dbReference type="NCBI Taxonomy" id="257313"/>
    <lineage>
        <taxon>Bacteria</taxon>
        <taxon>Pseudomonadati</taxon>
        <taxon>Pseudomonadota</taxon>
        <taxon>Betaproteobacteria</taxon>
        <taxon>Burkholderiales</taxon>
        <taxon>Alcaligenaceae</taxon>
        <taxon>Bordetella</taxon>
    </lineage>
</organism>
<comment type="similarity">
    <text evidence="1">Belongs to the universal ribosomal protein uS2 family.</text>
</comment>
<accession>Q7VYD0</accession>
<sequence>MSLMREMLEAGVHFGHQTRYWNPKMAPYIFGHRNKIHIINLEQTVAKYQEASKFVKQLVARGGNILFVGTKRAARELVATEAARCGMPYVDARWLGGMLTNFKTVKSSIKRLKDMEAMVADGGFERMTKKEGLLFQRELDKLNKSIGGIKDMNGLPDALFVIDVGYHKIAVAEAKVLGIPVVAVVDTNHSPDGIDHVIPGNDDSARAIALYAKGMADAVLEGREQNINGLVEEIGEGQEEFVEVQDNQA</sequence>
<protein>
    <recommendedName>
        <fullName evidence="1">Small ribosomal subunit protein uS2</fullName>
    </recommendedName>
    <alternativeName>
        <fullName evidence="2">30S ribosomal protein S2</fullName>
    </alternativeName>
</protein>
<gene>
    <name evidence="1" type="primary">rpsB</name>
    <name type="ordered locus">BP1419</name>
</gene>
<keyword id="KW-1185">Reference proteome</keyword>
<keyword id="KW-0687">Ribonucleoprotein</keyword>
<keyword id="KW-0689">Ribosomal protein</keyword>